<name>RS7_METBU</name>
<organism>
    <name type="scientific">Methanococcoides burtonii (strain DSM 6242 / NBRC 107633 / OCM 468 / ACE-M)</name>
    <dbReference type="NCBI Taxonomy" id="259564"/>
    <lineage>
        <taxon>Archaea</taxon>
        <taxon>Methanobacteriati</taxon>
        <taxon>Methanobacteriota</taxon>
        <taxon>Stenosarchaea group</taxon>
        <taxon>Methanomicrobia</taxon>
        <taxon>Methanosarcinales</taxon>
        <taxon>Methanosarcinaceae</taxon>
        <taxon>Methanococcoides</taxon>
    </lineage>
</organism>
<protein>
    <recommendedName>
        <fullName evidence="1">Small ribosomal subunit protein uS7</fullName>
    </recommendedName>
    <alternativeName>
        <fullName evidence="2">30S ribosomal protein S7</fullName>
    </alternativeName>
</protein>
<dbReference type="EMBL" id="CP000300">
    <property type="protein sequence ID" value="ABE52095.1"/>
    <property type="molecule type" value="Genomic_DNA"/>
</dbReference>
<dbReference type="EMBL" id="AF003869">
    <property type="protein sequence ID" value="AAC79154.1"/>
    <property type="molecule type" value="Genomic_DNA"/>
</dbReference>
<dbReference type="PIR" id="T43942">
    <property type="entry name" value="T43942"/>
</dbReference>
<dbReference type="RefSeq" id="WP_011499241.1">
    <property type="nucleotide sequence ID" value="NC_007955.1"/>
</dbReference>
<dbReference type="SMR" id="O93631"/>
<dbReference type="STRING" id="259564.Mbur_1172"/>
<dbReference type="GeneID" id="3998459"/>
<dbReference type="KEGG" id="mbu:Mbur_1172"/>
<dbReference type="HOGENOM" id="CLU_063975_0_0_2"/>
<dbReference type="OrthoDB" id="45346at2157"/>
<dbReference type="Proteomes" id="UP000001979">
    <property type="component" value="Chromosome"/>
</dbReference>
<dbReference type="GO" id="GO:0015935">
    <property type="term" value="C:small ribosomal subunit"/>
    <property type="evidence" value="ECO:0007669"/>
    <property type="project" value="InterPro"/>
</dbReference>
<dbReference type="GO" id="GO:0019843">
    <property type="term" value="F:rRNA binding"/>
    <property type="evidence" value="ECO:0007669"/>
    <property type="project" value="UniProtKB-UniRule"/>
</dbReference>
<dbReference type="GO" id="GO:0003735">
    <property type="term" value="F:structural constituent of ribosome"/>
    <property type="evidence" value="ECO:0007669"/>
    <property type="project" value="InterPro"/>
</dbReference>
<dbReference type="GO" id="GO:0006412">
    <property type="term" value="P:translation"/>
    <property type="evidence" value="ECO:0007669"/>
    <property type="project" value="UniProtKB-UniRule"/>
</dbReference>
<dbReference type="CDD" id="cd14867">
    <property type="entry name" value="uS7_Eukaryote"/>
    <property type="match status" value="1"/>
</dbReference>
<dbReference type="Gene3D" id="1.10.455.10">
    <property type="entry name" value="Ribosomal protein S7 domain"/>
    <property type="match status" value="1"/>
</dbReference>
<dbReference type="HAMAP" id="MF_00480_A">
    <property type="entry name" value="Ribosomal_uS7_A"/>
    <property type="match status" value="1"/>
</dbReference>
<dbReference type="InterPro" id="IPR000235">
    <property type="entry name" value="Ribosomal_uS7"/>
</dbReference>
<dbReference type="InterPro" id="IPR026018">
    <property type="entry name" value="Ribosomal_uS7_arc"/>
</dbReference>
<dbReference type="InterPro" id="IPR020606">
    <property type="entry name" value="Ribosomal_uS7_CS"/>
</dbReference>
<dbReference type="InterPro" id="IPR023798">
    <property type="entry name" value="Ribosomal_uS7_dom"/>
</dbReference>
<dbReference type="InterPro" id="IPR036823">
    <property type="entry name" value="Ribosomal_uS7_dom_sf"/>
</dbReference>
<dbReference type="InterPro" id="IPR005716">
    <property type="entry name" value="Ribosomal_uS7_euk/arc"/>
</dbReference>
<dbReference type="NCBIfam" id="NF003106">
    <property type="entry name" value="PRK04027.1"/>
    <property type="match status" value="1"/>
</dbReference>
<dbReference type="NCBIfam" id="TIGR01028">
    <property type="entry name" value="uS7_euk_arch"/>
    <property type="match status" value="1"/>
</dbReference>
<dbReference type="PANTHER" id="PTHR11205">
    <property type="entry name" value="RIBOSOMAL PROTEIN S7"/>
    <property type="match status" value="1"/>
</dbReference>
<dbReference type="Pfam" id="PF00177">
    <property type="entry name" value="Ribosomal_S7"/>
    <property type="match status" value="1"/>
</dbReference>
<dbReference type="PIRSF" id="PIRSF002122">
    <property type="entry name" value="RPS7p_RPS7a_RPS5e_RPS7o"/>
    <property type="match status" value="1"/>
</dbReference>
<dbReference type="SUPFAM" id="SSF47973">
    <property type="entry name" value="Ribosomal protein S7"/>
    <property type="match status" value="1"/>
</dbReference>
<dbReference type="PROSITE" id="PS00052">
    <property type="entry name" value="RIBOSOMAL_S7"/>
    <property type="match status" value="1"/>
</dbReference>
<gene>
    <name evidence="1" type="primary">rps7</name>
    <name type="ordered locus">Mbur_1172</name>
</gene>
<keyword id="KW-0687">Ribonucleoprotein</keyword>
<keyword id="KW-0689">Ribosomal protein</keyword>
<keyword id="KW-0694">RNA-binding</keyword>
<keyword id="KW-0699">rRNA-binding</keyword>
<proteinExistence type="inferred from homology"/>
<feature type="chain" id="PRO_0000124398" description="Small ribosomal subunit protein uS7">
    <location>
        <begin position="1"/>
        <end position="186"/>
    </location>
</feature>
<reference key="1">
    <citation type="journal article" date="2009" name="ISME J.">
        <title>The genome sequence of the psychrophilic archaeon, Methanococcoides burtonii: the role of genome evolution in cold adaptation.</title>
        <authorList>
            <person name="Allen M.A."/>
            <person name="Lauro F.M."/>
            <person name="Williams T.J."/>
            <person name="Burg D."/>
            <person name="Siddiqui K.S."/>
            <person name="De Francisci D."/>
            <person name="Chong K.W."/>
            <person name="Pilak O."/>
            <person name="Chew H.H."/>
            <person name="De Maere M.Z."/>
            <person name="Ting L."/>
            <person name="Katrib M."/>
            <person name="Ng C."/>
            <person name="Sowers K.R."/>
            <person name="Galperin M.Y."/>
            <person name="Anderson I.J."/>
            <person name="Ivanova N."/>
            <person name="Dalin E."/>
            <person name="Martinez M."/>
            <person name="Lapidus A."/>
            <person name="Hauser L."/>
            <person name="Land M."/>
            <person name="Thomas T."/>
            <person name="Cavicchioli R."/>
        </authorList>
    </citation>
    <scope>NUCLEOTIDE SEQUENCE [LARGE SCALE GENOMIC DNA]</scope>
    <source>
        <strain>DSM 6242 / NBRC 107633 / OCM 468 / ACE-M</strain>
    </source>
</reference>
<reference key="2">
    <citation type="journal article" date="1998" name="FEBS Lett.">
        <title>Archaeal cold-adapted proteins: structural and evolutionary analysis of the elongation factor 2 proteins from psychrophilic, mesophilic and thermophilic methanogens.</title>
        <authorList>
            <person name="Thomas T."/>
            <person name="Cavicchioli R."/>
        </authorList>
    </citation>
    <scope>NUCLEOTIDE SEQUENCE [GENOMIC DNA] OF 27-186</scope>
</reference>
<evidence type="ECO:0000255" key="1">
    <source>
        <dbReference type="HAMAP-Rule" id="MF_00480"/>
    </source>
</evidence>
<evidence type="ECO:0000305" key="2"/>
<accession>O93631</accession>
<accession>Q12WT1</accession>
<comment type="function">
    <text evidence="1">One of the primary rRNA binding proteins, it binds directly to 16S rRNA where it nucleates assembly of the head domain of the 30S subunit. Is located at the subunit interface close to the decoding center.</text>
</comment>
<comment type="subunit">
    <text>Part of the 30S ribosomal subunit.</text>
</comment>
<comment type="similarity">
    <text evidence="1">Belongs to the universal ribosomal protein uS7 family.</text>
</comment>
<sequence>MYKLFGKWDLTEVEVADAGIKRYVNLDPVIVPHTSGKHARQQFNKSDITIVERLVNNVMRNAQNTGKKQIALRIVDEAFDIVNSKTKKNPVQVLVEAVSNAGPREEVVRLKYGGISVPKAVDTAPQRRVDHALRNISIGSNQTAFKSKRSAAECLASELIAASNRDAKCFSINRKDGKERVAKAAR</sequence>